<comment type="function">
    <text evidence="1">Prevents the cell division inhibition by proteins MinC and MinD at internal division sites while permitting inhibition at polar sites. This ensures cell division at the proper site by restricting the formation of a division septum at the midpoint of the long axis of the cell.</text>
</comment>
<comment type="similarity">
    <text evidence="1">Belongs to the MinE family.</text>
</comment>
<evidence type="ECO:0000255" key="1">
    <source>
        <dbReference type="HAMAP-Rule" id="MF_00262"/>
    </source>
</evidence>
<gene>
    <name evidence="1" type="primary">minE</name>
    <name type="ordered locus">YpsIP31758_2012</name>
</gene>
<dbReference type="EMBL" id="CP000720">
    <property type="protein sequence ID" value="ABS46226.1"/>
    <property type="molecule type" value="Genomic_DNA"/>
</dbReference>
<dbReference type="RefSeq" id="WP_002211180.1">
    <property type="nucleotide sequence ID" value="NC_009708.1"/>
</dbReference>
<dbReference type="SMR" id="A7FIA7"/>
<dbReference type="GeneID" id="97456410"/>
<dbReference type="KEGG" id="ypi:YpsIP31758_2012"/>
<dbReference type="HOGENOM" id="CLU_137929_2_2_6"/>
<dbReference type="Proteomes" id="UP000002412">
    <property type="component" value="Chromosome"/>
</dbReference>
<dbReference type="GO" id="GO:0051301">
    <property type="term" value="P:cell division"/>
    <property type="evidence" value="ECO:0007669"/>
    <property type="project" value="UniProtKB-KW"/>
</dbReference>
<dbReference type="GO" id="GO:0032955">
    <property type="term" value="P:regulation of division septum assembly"/>
    <property type="evidence" value="ECO:0007669"/>
    <property type="project" value="InterPro"/>
</dbReference>
<dbReference type="FunFam" id="3.30.1070.10:FF:000001">
    <property type="entry name" value="Cell division topological specificity factor"/>
    <property type="match status" value="1"/>
</dbReference>
<dbReference type="Gene3D" id="3.30.1070.10">
    <property type="entry name" value="Cell division topological specificity factor MinE"/>
    <property type="match status" value="1"/>
</dbReference>
<dbReference type="HAMAP" id="MF_00262">
    <property type="entry name" value="MinE"/>
    <property type="match status" value="1"/>
</dbReference>
<dbReference type="InterPro" id="IPR005527">
    <property type="entry name" value="MinE"/>
</dbReference>
<dbReference type="InterPro" id="IPR036707">
    <property type="entry name" value="MinE_sf"/>
</dbReference>
<dbReference type="NCBIfam" id="TIGR01215">
    <property type="entry name" value="minE"/>
    <property type="match status" value="1"/>
</dbReference>
<dbReference type="NCBIfam" id="NF001422">
    <property type="entry name" value="PRK00296.1"/>
    <property type="match status" value="1"/>
</dbReference>
<dbReference type="Pfam" id="PF03776">
    <property type="entry name" value="MinE"/>
    <property type="match status" value="1"/>
</dbReference>
<dbReference type="SUPFAM" id="SSF55229">
    <property type="entry name" value="Cell division protein MinE topological specificity domain"/>
    <property type="match status" value="1"/>
</dbReference>
<proteinExistence type="inferred from homology"/>
<keyword id="KW-0131">Cell cycle</keyword>
<keyword id="KW-0132">Cell division</keyword>
<sequence>MALLDFFLSRKKPTANIAKERLQIIVAERRRGDSEPHYLPDLKRDILAVICKYIQIDPEMLHVQFEQKGDDISVLELNVTLPETEETPK</sequence>
<feature type="chain" id="PRO_1000059114" description="Cell division topological specificity factor">
    <location>
        <begin position="1"/>
        <end position="89"/>
    </location>
</feature>
<name>MINE_YERP3</name>
<accession>A7FIA7</accession>
<reference key="1">
    <citation type="journal article" date="2007" name="PLoS Genet.">
        <title>The complete genome sequence of Yersinia pseudotuberculosis IP31758, the causative agent of Far East scarlet-like fever.</title>
        <authorList>
            <person name="Eppinger M."/>
            <person name="Rosovitz M.J."/>
            <person name="Fricke W.F."/>
            <person name="Rasko D.A."/>
            <person name="Kokorina G."/>
            <person name="Fayolle C."/>
            <person name="Lindler L.E."/>
            <person name="Carniel E."/>
            <person name="Ravel J."/>
        </authorList>
    </citation>
    <scope>NUCLEOTIDE SEQUENCE [LARGE SCALE GENOMIC DNA]</scope>
    <source>
        <strain>IP 31758</strain>
    </source>
</reference>
<organism>
    <name type="scientific">Yersinia pseudotuberculosis serotype O:1b (strain IP 31758)</name>
    <dbReference type="NCBI Taxonomy" id="349747"/>
    <lineage>
        <taxon>Bacteria</taxon>
        <taxon>Pseudomonadati</taxon>
        <taxon>Pseudomonadota</taxon>
        <taxon>Gammaproteobacteria</taxon>
        <taxon>Enterobacterales</taxon>
        <taxon>Yersiniaceae</taxon>
        <taxon>Yersinia</taxon>
    </lineage>
</organism>
<protein>
    <recommendedName>
        <fullName evidence="1">Cell division topological specificity factor</fullName>
    </recommendedName>
</protein>